<keyword id="KW-0156">Chromatin regulator</keyword>
<keyword id="KW-0524">Neurogenesis</keyword>
<keyword id="KW-0539">Nucleus</keyword>
<keyword id="KW-1185">Reference proteome</keyword>
<keyword id="KW-0804">Transcription</keyword>
<keyword id="KW-0805">Transcription regulation</keyword>
<gene>
    <name type="primary">Actl6b</name>
    <name type="synonym">Actl6</name>
    <name type="synonym">Arpna</name>
    <name type="synonym">Baf53b</name>
</gene>
<sequence>MSGGVYGGDEVGALVFDIGSFSVRAGYAGEDCPKADFPTTVGLLAAEEGGGLELEGEKEKKGKIFHIDTNALHVPRDGAEVMSPLKNGMIEDWECFRAILDHTYSKHVKSEPNLHPVLMSEAPWNTRAKREKLTELMFEQYNIPAFFLCKTAVLTAFANGRSTGLVLDSGATHTTAIPVHDGYVLQQGIVKSPLAGDFISMQCRELFQEMAIDIIPPYMIAAKEPVREGAPPNWKKKEKLPQVSKSWHNYMCNEVIQDFQASVLQVSDSPYDEQVAAQMPTVHYEMPNGYNTDYGAERLRIPEGLFDPSNVKGLSGNTMLGVGHVVTTSIGMCDIDIRPGLYGSVIVTGGNTLLQGFTDRLNRELSQKTPPSMRLKLIASNSTMERKFSPWIGGSILASLGTFQQMWISKQEYEEGGKQCVERKCP</sequence>
<proteinExistence type="evidence at protein level"/>
<evidence type="ECO:0000250" key="1">
    <source>
        <dbReference type="UniProtKB" id="O94805"/>
    </source>
</evidence>
<evidence type="ECO:0000269" key="2">
    <source>
    </source>
</evidence>
<evidence type="ECO:0000269" key="3">
    <source>
    </source>
</evidence>
<evidence type="ECO:0000269" key="4">
    <source>
    </source>
</evidence>
<evidence type="ECO:0000269" key="5">
    <source>
    </source>
</evidence>
<evidence type="ECO:0000303" key="6">
    <source>
    </source>
</evidence>
<evidence type="ECO:0000303" key="7">
    <source>
    </source>
</evidence>
<evidence type="ECO:0000305" key="8"/>
<name>ACL6B_MOUSE</name>
<accession>Q99MR0</accession>
<accession>Q54A88</accession>
<feature type="chain" id="PRO_0000089136" description="Actin-like protein 6B">
    <location>
        <begin position="1"/>
        <end position="426"/>
    </location>
</feature>
<feature type="region of interest" description="Essential for mediating its function in dendritic development; may contribute to neuronal-specific targeting" evidence="5">
    <location>
        <begin position="39"/>
        <end position="82"/>
    </location>
</feature>
<organism>
    <name type="scientific">Mus musculus</name>
    <name type="common">Mouse</name>
    <dbReference type="NCBI Taxonomy" id="10090"/>
    <lineage>
        <taxon>Eukaryota</taxon>
        <taxon>Metazoa</taxon>
        <taxon>Chordata</taxon>
        <taxon>Craniata</taxon>
        <taxon>Vertebrata</taxon>
        <taxon>Euteleostomi</taxon>
        <taxon>Mammalia</taxon>
        <taxon>Eutheria</taxon>
        <taxon>Euarchontoglires</taxon>
        <taxon>Glires</taxon>
        <taxon>Rodentia</taxon>
        <taxon>Myomorpha</taxon>
        <taxon>Muroidea</taxon>
        <taxon>Muridae</taxon>
        <taxon>Murinae</taxon>
        <taxon>Mus</taxon>
        <taxon>Mus</taxon>
    </lineage>
</organism>
<comment type="function">
    <text evidence="1 2 4 5">Involved in transcriptional activation and repression of select genes by chromatin remodeling (alteration of DNA-nucleosome topology). Component of SWI/SNF chromatin remodeling complexes that carry out key enzymatic activities, changing chromatin structure by altering DNA-histone contacts within a nucleosome in an ATP-dependent manner. Belongs to the neuron-specific chromatin remodeling complex (nBAF complex), as such plays a role in remodeling mononucleosomes in an ATP-dependent fashion, and is required for postmitotic neural development and dendritic outgrowth. During neural development a switch from a stem/progenitor to a postmitotic chromatin remodeling mechanism occurs as neurons exit the cell cycle and become committed to their adult state. The transition from proliferating neural stem/progenitor cells to postmitotic neurons requires a switch in subunit composition of the npBAF and nBAF complexes. As neural progenitors exit mitosis and differentiate into neurons, npBAF complexes which contain ACTL6A/BAF53A and PHF10/BAF45A, are exchanged for homologous alternative ACTL6B/BAF53B and DPF1/BAF45B or DPF3/BAF45C subunits in neuron-specific complexes (nBAF). The npBAF complex is essential for the self-renewal/proliferative capacity of the multipotent neural stem cells. The nBAF complex along with CREST plays a role regulating the activity of genes essential for dendrite growth. ACTL6B/BAF53B is not essential for assembly of the nBAF complex but is required for targeting the complex and CREST to the promoter of genes essential for dendritic growth. Essential for neuronal maturation and dendrite development (By similarity).</text>
</comment>
<comment type="subunit">
    <text evidence="1 2 4 5 6 7">Component of the multiprotein chromatin-remodeling complexes SWI/SNF: SWI/SNF-A (BAF), SWI/SNF-B (PBAF) and related complexes. The canonical complex contains a catalytic subunit (either SMARCA4/BRG1/BAF190A or SMARCA2/BRM/BAF190B) and at least SMARCE1, ACTL6A/BAF53, SMARCC1/BAF155, SMARCC2/BAF170, and SMARCB1/SNF5/BAF47. Other subunits specific to each of the complexes may also be present permitting several possible combinations developmentally and tissue specific (PubMed:22952240, PubMed:26601204). Component of the BAF complex, which includes at least actin (ACTB), ARID1A/BAF250A, ARID1B/BAF250B, SMARCA2/BRM, SMARCA4/BRG1/BAF190A, ACTL6A/BAF53, ACTL6B/BAF53B, SMARCE1/BAF57, SMARCC1/BAF155, SMARCC2/BAF170, SMARCB1/SNF5/INI1, and one or more SMARCD1/BAF60A, SMARCD2/BAF60B, or SMARCD3/BAF60C (By similarity). Component of neuron-specific chromatin remodeling complex (nBAF complex) composed of at least, ARID1A/BAF250A or ARID1B/BAF250B, SMARCD1/BAF60A or SMARCD2/BAF60B or SMARCD3/BAF60C, SMARCA2/BRM/BAF190B, SMARCA4/BRG1/BAF190A, SMARCB1/BAF47, SMARCC1/BAF155, SMARCE1/BAF57, SMARCC2/BAF170, DPF1/BAF45B, DPF3/BAF45C, ACTL6B/BAF53B and actin (ACTB) (PubMed:12368262, PubMed:17640523, PubMed:17920018). Note that the nBAF complex is polymorphic in regard to the ATPase, SMARCA2 and SMARCA4 occupying mutually exclusive positions (PubMed:12368262). May be a component of the SWI/SNF-B (PBAF) chromatin remodeling complex, at least composed of SMARCA4/BRG1, SMARCB1/BAF47/SNF5, ACTL6A/BAF53A or ACTL6B/BAF53B, SMARCE1/BAF57, SMARCD1/BAF60A, SMARCD2/BAF60B, perhaps SMARCD3/BAF60C, SMARCC1/BAF155, SMARCC2/BAF170, PBRM1/BAF180, ARID2/BAF200 and actin (By similarity).</text>
</comment>
<comment type="subcellular location">
    <subcellularLocation>
        <location evidence="3">Nucleus</location>
    </subcellularLocation>
</comment>
<comment type="tissue specificity">
    <text evidence="2 3 4">Restricted to the brain and peripheral nervous tissue (at protein level). Present in virtually all neurons in the cerebral neocortex (layers II-VI), hippocampus (CA1-CA3 region and dentate gyrus), cerebellum (molecular, granular and Purkinje cell layers), spinal cord (dorsally and ventrally), dorsal root ganglion, retina and the olfactory bulb (mitral and granule cell layers). Expressed specifically in postmitotic neurons (at protein level).</text>
</comment>
<comment type="developmental stage">
    <text evidence="2 4">Expression begins near the time of neuronal cell type specification. First apparent at 10.5 dpc in the nervous system, with high levels in the telencephalon and less in the diencephalon, mesencephalon and spinal cord. This pattern of expression persists and becomes more defined at 12.5 dpc and later stages. Detected in dorsal root ganglia, but not in neural crest derivatives that give rise to non-neuronal tissues, including great vessels. Expressed in postmitotic cells in the CNS, but not in actively proliferating precursor cells. At protein level, first detected at 12.5 dpc in nervous tissues. In the developing forebrain, cerebellar primordium and spinal cord, strictly expressed in postmitotic neurons.</text>
</comment>
<comment type="induction">
    <text evidence="3">By retinoic acid of P19 embryonic carcinoma stem cells induced by this treatment to differentiate into neuronal cells.</text>
</comment>
<comment type="disruption phenotype">
    <text evidence="5">Mice have lethal defects in neuronal development, including defects in activity-dependent dendritic outgrowth.</text>
</comment>
<comment type="similarity">
    <text evidence="8">Belongs to the actin family.</text>
</comment>
<reference key="1">
    <citation type="journal article" date="2002" name="Biochem. Biophys. Res. Commun.">
        <title>Brain-specific expression of the nuclear actin-related protein ArpNalpha and its involvement in mammalian SWI/SNF chromatin remodeling complex.</title>
        <authorList>
            <person name="Kuroda Y."/>
            <person name="Oma Y."/>
            <person name="Nishimori K."/>
            <person name="Ohta T."/>
            <person name="Harata M."/>
        </authorList>
    </citation>
    <scope>NUCLEOTIDE SEQUENCE [MRNA]</scope>
    <scope>SUBCELLULAR LOCATION</scope>
    <scope>TISSUE SPECIFICITY</scope>
    <scope>INTERACTION WITH SMARCA2</scope>
    <scope>INDUCTION</scope>
    <source>
        <tissue>Embryonic carcinoma</tissue>
    </source>
</reference>
<reference key="2">
    <citation type="journal article" date="2001" name="Nucleic Acids Res.">
        <title>Comparative analysis of the gene-dense ACHE/TFR2 region on human chromosome 7q22 with the orthologous region on mouse chromosome 5.</title>
        <authorList>
            <person name="Wilson M.D."/>
            <person name="Riemer C."/>
            <person name="Martindale D.W."/>
            <person name="Schnupf P."/>
            <person name="Boright A.P."/>
            <person name="Cheung T.L."/>
            <person name="Hardy D.M."/>
            <person name="Schwartz S."/>
            <person name="Scherer S.W."/>
            <person name="Tsui L.-C."/>
            <person name="Miller W."/>
            <person name="Koop B.F."/>
        </authorList>
    </citation>
    <scope>NUCLEOTIDE SEQUENCE [GENOMIC DNA]</scope>
    <source>
        <strain>129/Sv</strain>
    </source>
</reference>
<reference key="3">
    <citation type="submission" date="2005-09" db="EMBL/GenBank/DDBJ databases">
        <authorList>
            <person name="Mural R.J."/>
            <person name="Adams M.D."/>
            <person name="Myers E.W."/>
            <person name="Smith H.O."/>
            <person name="Venter J.C."/>
        </authorList>
    </citation>
    <scope>NUCLEOTIDE SEQUENCE [LARGE SCALE GENOMIC DNA]</scope>
</reference>
<reference key="4">
    <citation type="journal article" date="2004" name="Genome Res.">
        <title>The status, quality, and expansion of the NIH full-length cDNA project: the Mammalian Gene Collection (MGC).</title>
        <authorList>
            <consortium name="The MGC Project Team"/>
        </authorList>
    </citation>
    <scope>NUCLEOTIDE SEQUENCE [LARGE SCALE MRNA]</scope>
    <source>
        <tissue>Brain</tissue>
    </source>
</reference>
<reference key="5">
    <citation type="journal article" date="2002" name="Genes Dev.">
        <title>Identification of a polymorphic, neuron-specific chromatin remodeling complex.</title>
        <authorList>
            <person name="Olave I."/>
            <person name="Wang W."/>
            <person name="Xue Y."/>
            <person name="Kuo A."/>
            <person name="Crabtree G.R."/>
        </authorList>
    </citation>
    <scope>FUNCTION</scope>
    <scope>IDENTIFICATION IN THE NBAF COMPLEX WITH ACTB; ARID1A; SMARCA2; SMARCA4; SMARCB1; SMARCC1; SMARCC2; SMARCD2 AND SMARCE1</scope>
    <scope>DEVELOPMENTAL STAGE</scope>
    <scope>TISSUE SPECIFICITY</scope>
</reference>
<reference key="6">
    <citation type="journal article" date="2007" name="Neuron">
        <title>An essential switch in subunit composition of a chromatin remodeling complex during neural development.</title>
        <authorList>
            <person name="Lessard J."/>
            <person name="Wu J.I."/>
            <person name="Ranish J.A."/>
            <person name="Wan M."/>
            <person name="Winslow M.M."/>
            <person name="Staahl B.T."/>
            <person name="Wu H."/>
            <person name="Aebersold R."/>
            <person name="Graef I.A."/>
            <person name="Crabtree G.R."/>
        </authorList>
    </citation>
    <scope>FUNCTION OF THE NBAF AND NPBAF COMPLEXES</scope>
    <scope>IDENTIFICATION BY MASS SPECTROMETRY</scope>
    <scope>IDENTIFICATION IN THE NBAF COMPLEX</scope>
    <scope>TISSUE SPECIFICITY</scope>
    <scope>DEVELOPMENTAL STAGE</scope>
</reference>
<reference key="7">
    <citation type="journal article" date="2007" name="Neuron">
        <title>Regulation of dendritic development by neuron-specific chromatin remodeling complexes.</title>
        <authorList>
            <person name="Wu J.I."/>
            <person name="Lessard J."/>
            <person name="Olave I.A."/>
            <person name="Qiu Z."/>
            <person name="Ghosh A."/>
            <person name="Graef I.A."/>
            <person name="Crabtree G.R."/>
        </authorList>
    </citation>
    <scope>FUNCTION</scope>
    <scope>DISRUPTION PHENOTYPE</scope>
    <scope>IDENTIFICATION IN THE NBAF COMPLEX</scope>
</reference>
<reference key="8">
    <citation type="journal article" date="2012" name="J. Biol. Chem.">
        <title>SWI/SNF chromatin-remodeling factors: multiscale analyses and diverse functions.</title>
        <authorList>
            <person name="Euskirchen G."/>
            <person name="Auerbach R.K."/>
            <person name="Snyder M."/>
        </authorList>
    </citation>
    <scope>REVIEW ON SWI/SNF CHROMATIN REMODELING COMPLEXES</scope>
</reference>
<reference key="9">
    <citation type="journal article" date="2015" name="Sci. Adv.">
        <title>Mammalian SWI/SNF chromatin remodeling complexes and cancer: Mechanistic insights gained from human genomics.</title>
        <authorList>
            <person name="Kadoch C."/>
            <person name="Crabtree G.R."/>
        </authorList>
    </citation>
    <scope>REVIEW ON SWI/SNF CHROMATIN REMODELING COMPLEXES</scope>
</reference>
<protein>
    <recommendedName>
        <fullName>Actin-like protein 6B</fullName>
    </recommendedName>
    <alternativeName>
        <fullName>53 kDa BRG1-associated factor B</fullName>
    </alternativeName>
    <alternativeName>
        <fullName>Actin-related protein Baf53b</fullName>
    </alternativeName>
    <alternativeName>
        <fullName>ArpN-alpha</fullName>
        <shortName>ArpNa</shortName>
    </alternativeName>
    <alternativeName>
        <fullName>BRG1-associated factor 53B</fullName>
        <shortName>BAF53B</shortName>
    </alternativeName>
</protein>
<dbReference type="EMBL" id="AB075226">
    <property type="protein sequence ID" value="BAB97312.1"/>
    <property type="molecule type" value="mRNA"/>
</dbReference>
<dbReference type="EMBL" id="AF312033">
    <property type="protein sequence ID" value="AAK28829.1"/>
    <property type="molecule type" value="Genomic_DNA"/>
</dbReference>
<dbReference type="EMBL" id="CH466529">
    <property type="protein sequence ID" value="EDL19262.1"/>
    <property type="molecule type" value="Genomic_DNA"/>
</dbReference>
<dbReference type="EMBL" id="BC049539">
    <property type="protein sequence ID" value="AAH49539.1"/>
    <property type="molecule type" value="mRNA"/>
</dbReference>
<dbReference type="CCDS" id="CCDS19770.1"/>
<dbReference type="RefSeq" id="NP_113581.1">
    <property type="nucleotide sequence ID" value="NM_031404.6"/>
</dbReference>
<dbReference type="SMR" id="Q99MR0"/>
<dbReference type="BioGRID" id="219970">
    <property type="interactions" value="5"/>
</dbReference>
<dbReference type="ComplexPortal" id="CPX-1236">
    <property type="entry name" value="SWI/SNF ATP-dependent chromatin remodeling complex, ACTL6B-ARID1A-SMARCA2 variant"/>
</dbReference>
<dbReference type="ComplexPortal" id="CPX-1237">
    <property type="entry name" value="SWI/SNF ATP-dependent chromatin remodeling complex, ACTL6B-ARID1A-SMARCA4 variant"/>
</dbReference>
<dbReference type="ComplexPortal" id="CPX-1238">
    <property type="entry name" value="SWI/SNF ATP-dependent chromatin remodeling complex, ACTL6B-ARID1B-SMARCA2 variant"/>
</dbReference>
<dbReference type="ComplexPortal" id="CPX-1239">
    <property type="entry name" value="SWI/SNF ATP-dependent chromatin remodeling complex, ACTL6B-ARID1B-SMARCA4 variant"/>
</dbReference>
<dbReference type="ComplexPortal" id="CPX-1244">
    <property type="entry name" value="Muscle cell-specific SWI/SNF ATP-dependent chromatin remodeling complex, ACTL6B-ARID1A-SMARCA2 variant"/>
</dbReference>
<dbReference type="ComplexPortal" id="CPX-1245">
    <property type="entry name" value="Muscle cell-specific SWI/SNF ATP-dependent chromatin remodeling complex, ACTL6B-ARID1A-SMARCA4 variant"/>
</dbReference>
<dbReference type="ComplexPortal" id="CPX-1246">
    <property type="entry name" value="Muscle cell-specific SWI/SNF ATP-dependent chromatin remodeling complex, ACTL6B-ARID1B-SMARCA2 variant"/>
</dbReference>
<dbReference type="ComplexPortal" id="CPX-1247">
    <property type="entry name" value="Muscle cell-specific SWI/SNF ATP-dependent chromatin remodeling complex, ACTL6B-ARID1B-SMARCA4 variant"/>
</dbReference>
<dbReference type="ComplexPortal" id="CPX-1250">
    <property type="entry name" value="Polybromo-associated SWI/SNF ATP-dependent chromatin remodeling complex, ACTL6B variant"/>
</dbReference>
<dbReference type="ComplexPortal" id="CPX-1256">
    <property type="entry name" value="Neuron-specific SWI/SNF ATP-dependent chromatin remodeling complex, ARID1A-SMARCA2 variant"/>
</dbReference>
<dbReference type="ComplexPortal" id="CPX-1257">
    <property type="entry name" value="Neuron-specific SWI/SNF ATP-dependent chromatin remodeling complex, ARID1A-SMARCA4 variant"/>
</dbReference>
<dbReference type="ComplexPortal" id="CPX-1258">
    <property type="entry name" value="Neuron-specific SWI/SNF ATP-dependent chromatin remodeling complex, ARID1B-SMARCA2 variant"/>
</dbReference>
<dbReference type="ComplexPortal" id="CPX-1259">
    <property type="entry name" value="Neuron-specific SWI/SNF ATP-dependent chromatin remodeling complex, ARID1B-SMARCA4 variant"/>
</dbReference>
<dbReference type="ComplexPortal" id="CPX-1261">
    <property type="entry name" value="Brain-specific SWI/SNF ATP-dependent chromatin remodeling complex, ARID1A-SMARCA2 variant"/>
</dbReference>
<dbReference type="ComplexPortal" id="CPX-1262">
    <property type="entry name" value="Brain-specific SWI/SNF ATP-dependent chromatin remodeling complex, ARID1A-SMARCA4 variant"/>
</dbReference>
<dbReference type="ComplexPortal" id="CPX-1263">
    <property type="entry name" value="Brain-specific SWI/SNF ATP-dependent chromatin remodeling complex, ARID1B-SMARCA2 variant"/>
</dbReference>
<dbReference type="ComplexPortal" id="CPX-1264">
    <property type="entry name" value="Brain-specific SWI/SNF ATP-dependent chromatin remodeling complex, ARID1B-SMARCA4 variant"/>
</dbReference>
<dbReference type="ComplexPortal" id="CPX-4227">
    <property type="entry name" value="GBAF (SWI/SNF) ATP-dependent chromatin remodeling complex, ACTL6B-BICRA-SMARCA2 variant"/>
</dbReference>
<dbReference type="ComplexPortal" id="CPX-4228">
    <property type="entry name" value="GBAF (SWI/SNF) ATP-dependent chromatin remodeling complex, ACTL6B-BICRAL-SMARCA2 variant"/>
</dbReference>
<dbReference type="ComplexPortal" id="CPX-4229">
    <property type="entry name" value="GBAF (SWI/SNF) ATP-dependent chromatin remodeling complex, ACTL6B-BICRA-SMARCA4 variant"/>
</dbReference>
<dbReference type="ComplexPortal" id="CPX-4230">
    <property type="entry name" value="GBAF (SWI/SNF) ATP-dependent chromatin remodeling complex, ACTL6B-BICRAL-SMARCA4 variant"/>
</dbReference>
<dbReference type="FunCoup" id="Q99MR0">
    <property type="interactions" value="1126"/>
</dbReference>
<dbReference type="IntAct" id="Q99MR0">
    <property type="interactions" value="3"/>
</dbReference>
<dbReference type="MINT" id="Q99MR0"/>
<dbReference type="STRING" id="10090.ENSMUSP00000119356"/>
<dbReference type="PhosphoSitePlus" id="Q99MR0"/>
<dbReference type="PaxDb" id="10090-ENSMUSP00000119356"/>
<dbReference type="PeptideAtlas" id="Q99MR0"/>
<dbReference type="ProteomicsDB" id="285704"/>
<dbReference type="ABCD" id="Q99MR0">
    <property type="antibodies" value="1 sequenced antibody"/>
</dbReference>
<dbReference type="Antibodypedia" id="30798">
    <property type="antibodies" value="202 antibodies from 32 providers"/>
</dbReference>
<dbReference type="DNASU" id="83766"/>
<dbReference type="Ensembl" id="ENSMUST00000139395.8">
    <property type="protein sequence ID" value="ENSMUSP00000119356.2"/>
    <property type="gene ID" value="ENSMUSG00000029712.15"/>
</dbReference>
<dbReference type="GeneID" id="83766"/>
<dbReference type="KEGG" id="mmu:83766"/>
<dbReference type="UCSC" id="uc009acu.1">
    <property type="organism name" value="mouse"/>
</dbReference>
<dbReference type="AGR" id="MGI:1933548"/>
<dbReference type="CTD" id="51412"/>
<dbReference type="MGI" id="MGI:1933548">
    <property type="gene designation" value="Actl6b"/>
</dbReference>
<dbReference type="VEuPathDB" id="HostDB:ENSMUSG00000029712"/>
<dbReference type="eggNOG" id="KOG0679">
    <property type="taxonomic scope" value="Eukaryota"/>
</dbReference>
<dbReference type="GeneTree" id="ENSGT00940000160860"/>
<dbReference type="HOGENOM" id="CLU_027965_6_0_1"/>
<dbReference type="InParanoid" id="Q99MR0"/>
<dbReference type="OMA" id="SKSWHSY"/>
<dbReference type="OrthoDB" id="5132116at2759"/>
<dbReference type="PhylomeDB" id="Q99MR0"/>
<dbReference type="TreeFam" id="TF312863"/>
<dbReference type="Reactome" id="R-MMU-3214858">
    <property type="pathway name" value="RMTs methylate histone arginines"/>
</dbReference>
<dbReference type="Reactome" id="R-MMU-8939243">
    <property type="pathway name" value="RUNX1 interacts with co-factors whose precise effect on RUNX1 targets is not known"/>
</dbReference>
<dbReference type="BioGRID-ORCS" id="83766">
    <property type="hits" value="2 hits in 78 CRISPR screens"/>
</dbReference>
<dbReference type="ChiTaRS" id="Actl6b">
    <property type="organism name" value="mouse"/>
</dbReference>
<dbReference type="PRO" id="PR:Q99MR0"/>
<dbReference type="Proteomes" id="UP000000589">
    <property type="component" value="Chromosome 5"/>
</dbReference>
<dbReference type="RNAct" id="Q99MR0">
    <property type="molecule type" value="protein"/>
</dbReference>
<dbReference type="Bgee" id="ENSMUSG00000029712">
    <property type="expression patterns" value="Expressed in embryonic brain and 108 other cell types or tissues"/>
</dbReference>
<dbReference type="ExpressionAtlas" id="Q99MR0">
    <property type="expression patterns" value="baseline and differential"/>
</dbReference>
<dbReference type="GO" id="GO:0140092">
    <property type="term" value="C:bBAF complex"/>
    <property type="evidence" value="ECO:0000303"/>
    <property type="project" value="ComplexPortal"/>
</dbReference>
<dbReference type="GO" id="GO:0035060">
    <property type="term" value="C:brahma complex"/>
    <property type="evidence" value="ECO:0000303"/>
    <property type="project" value="ComplexPortal"/>
</dbReference>
<dbReference type="GO" id="GO:0000785">
    <property type="term" value="C:chromatin"/>
    <property type="evidence" value="ECO:0000303"/>
    <property type="project" value="ComplexPortal"/>
</dbReference>
<dbReference type="GO" id="GO:0140288">
    <property type="term" value="C:GBAF complex"/>
    <property type="evidence" value="ECO:0000303"/>
    <property type="project" value="ComplexPortal"/>
</dbReference>
<dbReference type="GO" id="GO:0000776">
    <property type="term" value="C:kinetochore"/>
    <property type="evidence" value="ECO:0000303"/>
    <property type="project" value="ComplexPortal"/>
</dbReference>
<dbReference type="GO" id="GO:0071565">
    <property type="term" value="C:nBAF complex"/>
    <property type="evidence" value="ECO:0000314"/>
    <property type="project" value="UniProtKB"/>
</dbReference>
<dbReference type="GO" id="GO:0016363">
    <property type="term" value="C:nuclear matrix"/>
    <property type="evidence" value="ECO:0000303"/>
    <property type="project" value="ComplexPortal"/>
</dbReference>
<dbReference type="GO" id="GO:0005634">
    <property type="term" value="C:nucleus"/>
    <property type="evidence" value="ECO:0000266"/>
    <property type="project" value="MGI"/>
</dbReference>
<dbReference type="GO" id="GO:0016586">
    <property type="term" value="C:RSC-type complex"/>
    <property type="evidence" value="ECO:0000303"/>
    <property type="project" value="ComplexPortal"/>
</dbReference>
<dbReference type="GO" id="GO:0016514">
    <property type="term" value="C:SWI/SNF complex"/>
    <property type="evidence" value="ECO:0000314"/>
    <property type="project" value="UniProtKB"/>
</dbReference>
<dbReference type="GO" id="GO:0006325">
    <property type="term" value="P:chromatin organization"/>
    <property type="evidence" value="ECO:0000305"/>
    <property type="project" value="UniProtKB"/>
</dbReference>
<dbReference type="GO" id="GO:0006338">
    <property type="term" value="P:chromatin remodeling"/>
    <property type="evidence" value="ECO:0000303"/>
    <property type="project" value="ComplexPortal"/>
</dbReference>
<dbReference type="GO" id="GO:0016358">
    <property type="term" value="P:dendrite development"/>
    <property type="evidence" value="ECO:0000250"/>
    <property type="project" value="UniProtKB"/>
</dbReference>
<dbReference type="GO" id="GO:0045596">
    <property type="term" value="P:negative regulation of cell differentiation"/>
    <property type="evidence" value="ECO:0000303"/>
    <property type="project" value="ComplexPortal"/>
</dbReference>
<dbReference type="GO" id="GO:0007399">
    <property type="term" value="P:nervous system development"/>
    <property type="evidence" value="ECO:0000315"/>
    <property type="project" value="UniProtKB"/>
</dbReference>
<dbReference type="GO" id="GO:0042551">
    <property type="term" value="P:neuron maturation"/>
    <property type="evidence" value="ECO:0000250"/>
    <property type="project" value="UniProtKB"/>
</dbReference>
<dbReference type="GO" id="GO:0045597">
    <property type="term" value="P:positive regulation of cell differentiation"/>
    <property type="evidence" value="ECO:0000303"/>
    <property type="project" value="ComplexPortal"/>
</dbReference>
<dbReference type="GO" id="GO:0008284">
    <property type="term" value="P:positive regulation of cell population proliferation"/>
    <property type="evidence" value="ECO:0000303"/>
    <property type="project" value="ComplexPortal"/>
</dbReference>
<dbReference type="GO" id="GO:2000781">
    <property type="term" value="P:positive regulation of double-strand break repair"/>
    <property type="evidence" value="ECO:0000303"/>
    <property type="project" value="ComplexPortal"/>
</dbReference>
<dbReference type="GO" id="GO:0045663">
    <property type="term" value="P:positive regulation of myoblast differentiation"/>
    <property type="evidence" value="ECO:0000303"/>
    <property type="project" value="ComplexPortal"/>
</dbReference>
<dbReference type="GO" id="GO:1902459">
    <property type="term" value="P:positive regulation of stem cell population maintenance"/>
    <property type="evidence" value="ECO:0000303"/>
    <property type="project" value="ComplexPortal"/>
</dbReference>
<dbReference type="GO" id="GO:0045582">
    <property type="term" value="P:positive regulation of T cell differentiation"/>
    <property type="evidence" value="ECO:0000303"/>
    <property type="project" value="ComplexPortal"/>
</dbReference>
<dbReference type="GO" id="GO:0070316">
    <property type="term" value="P:regulation of G0 to G1 transition"/>
    <property type="evidence" value="ECO:0000303"/>
    <property type="project" value="ComplexPortal"/>
</dbReference>
<dbReference type="GO" id="GO:2000045">
    <property type="term" value="P:regulation of G1/S transition of mitotic cell cycle"/>
    <property type="evidence" value="ECO:0000303"/>
    <property type="project" value="ComplexPortal"/>
</dbReference>
<dbReference type="GO" id="GO:0030071">
    <property type="term" value="P:regulation of mitotic metaphase/anaphase transition"/>
    <property type="evidence" value="ECO:0000303"/>
    <property type="project" value="ComplexPortal"/>
</dbReference>
<dbReference type="GO" id="GO:2000819">
    <property type="term" value="P:regulation of nucleotide-excision repair"/>
    <property type="evidence" value="ECO:0000303"/>
    <property type="project" value="ComplexPortal"/>
</dbReference>
<dbReference type="GO" id="GO:0006357">
    <property type="term" value="P:regulation of transcription by RNA polymerase II"/>
    <property type="evidence" value="ECO:0000303"/>
    <property type="project" value="ComplexPortal"/>
</dbReference>
<dbReference type="CDD" id="cd13395">
    <property type="entry name" value="ASKHA_NBD_Arp4_ACTL6-like"/>
    <property type="match status" value="1"/>
</dbReference>
<dbReference type="FunFam" id="3.30.420.40:FF:000796">
    <property type="entry name" value="Actin like 6B"/>
    <property type="match status" value="1"/>
</dbReference>
<dbReference type="FunFam" id="3.90.640.10:FF:000009">
    <property type="entry name" value="Actin-like 6A, isoform CRA_a"/>
    <property type="match status" value="1"/>
</dbReference>
<dbReference type="FunFam" id="2.30.36.70:FF:000005">
    <property type="entry name" value="Actin-like protein 6B"/>
    <property type="match status" value="1"/>
</dbReference>
<dbReference type="FunFam" id="3.30.420.40:FF:000375">
    <property type="entry name" value="Actin-related protein 8"/>
    <property type="match status" value="1"/>
</dbReference>
<dbReference type="FunFam" id="3.30.420.40:FF:000058">
    <property type="entry name" value="Putative actin-related protein 5"/>
    <property type="match status" value="1"/>
</dbReference>
<dbReference type="Gene3D" id="3.30.420.40">
    <property type="match status" value="2"/>
</dbReference>
<dbReference type="Gene3D" id="2.30.36.70">
    <property type="entry name" value="Actin, Chain A, domain 2"/>
    <property type="match status" value="1"/>
</dbReference>
<dbReference type="Gene3D" id="3.90.640.10">
    <property type="entry name" value="Actin, Chain A, domain 4"/>
    <property type="match status" value="1"/>
</dbReference>
<dbReference type="InterPro" id="IPR004000">
    <property type="entry name" value="Actin"/>
</dbReference>
<dbReference type="InterPro" id="IPR004001">
    <property type="entry name" value="Actin_CS"/>
</dbReference>
<dbReference type="InterPro" id="IPR043129">
    <property type="entry name" value="ATPase_NBD"/>
</dbReference>
<dbReference type="PANTHER" id="PTHR11937">
    <property type="entry name" value="ACTIN"/>
    <property type="match status" value="1"/>
</dbReference>
<dbReference type="Pfam" id="PF00022">
    <property type="entry name" value="Actin"/>
    <property type="match status" value="1"/>
</dbReference>
<dbReference type="PRINTS" id="PR00190">
    <property type="entry name" value="ACTIN"/>
</dbReference>
<dbReference type="SMART" id="SM00268">
    <property type="entry name" value="ACTIN"/>
    <property type="match status" value="1"/>
</dbReference>
<dbReference type="SUPFAM" id="SSF53067">
    <property type="entry name" value="Actin-like ATPase domain"/>
    <property type="match status" value="2"/>
</dbReference>
<dbReference type="PROSITE" id="PS00432">
    <property type="entry name" value="ACTINS_2"/>
    <property type="match status" value="1"/>
</dbReference>